<name>HYD4_GIBMO</name>
<reference key="1">
    <citation type="journal article" date="2004" name="Fungal Genet. Biol.">
        <title>Five hydrophobin genes in Fusarium verticillioides include two required for microconidial chain formation.</title>
        <authorList>
            <person name="Fuchs U."/>
            <person name="Czymmek K.J."/>
            <person name="Sweigard J.A."/>
        </authorList>
    </citation>
    <scope>NUCLEOTIDE SEQUENCE [GENOMIC DNA]</scope>
    <scope>FUNCTION</scope>
    <scope>DISRUPTION PHENOTYPE</scope>
    <source>
        <strain>M-3125</strain>
    </source>
</reference>
<proteinExistence type="inferred from homology"/>
<comment type="function">
    <text evidence="3 6">Aerial growth, conidiation, and dispersal of filamentous fungi in the environment rely upon a capability of their secreting small amphipathic proteins called hydrophobins (HPBs) with low sequence identity. Class I can self-assemble into an outermost layer of rodlet bundles on aerial cell surfaces, conferring cellular hydrophobicity that supports fungal growth, development and dispersal; whereas Class II form highly ordered films at water-air interfaces through intermolecular interactions but contribute nothing to the rodlet structure (Probable). Does not seem to be important for the ability to cause seedling disease (PubMed:15288021).</text>
</comment>
<comment type="subcellular location">
    <subcellularLocation>
        <location evidence="6">Secreted</location>
    </subcellularLocation>
    <subcellularLocation>
        <location evidence="6">Secreted</location>
        <location evidence="6">Cell wall</location>
    </subcellularLocation>
</comment>
<comment type="disruption phenotype">
    <text evidence="3">Does not affect pathogenicity in a corn seedling infection assay nor the production of microconidia.</text>
</comment>
<comment type="similarity">
    <text evidence="5">Belongs to the cerato-ulmin hydrophobin family.</text>
</comment>
<organism>
    <name type="scientific">Gibberella moniliformis</name>
    <name type="common">Maize ear and stalk rot fungus</name>
    <name type="synonym">Fusarium verticillioides</name>
    <dbReference type="NCBI Taxonomy" id="117187"/>
    <lineage>
        <taxon>Eukaryota</taxon>
        <taxon>Fungi</taxon>
        <taxon>Dikarya</taxon>
        <taxon>Ascomycota</taxon>
        <taxon>Pezizomycotina</taxon>
        <taxon>Sordariomycetes</taxon>
        <taxon>Hypocreomycetidae</taxon>
        <taxon>Hypocreales</taxon>
        <taxon>Nectriaceae</taxon>
        <taxon>Fusarium</taxon>
        <taxon>Fusarium fujikuroi species complex</taxon>
    </lineage>
</organism>
<evidence type="ECO:0000250" key="1">
    <source>
        <dbReference type="UniProtKB" id="P52754"/>
    </source>
</evidence>
<evidence type="ECO:0000255" key="2"/>
<evidence type="ECO:0000269" key="3">
    <source>
    </source>
</evidence>
<evidence type="ECO:0000303" key="4">
    <source>
    </source>
</evidence>
<evidence type="ECO:0000305" key="5"/>
<evidence type="ECO:0000305" key="6">
    <source>
    </source>
</evidence>
<protein>
    <recommendedName>
        <fullName evidence="4">Class II hydrophobin 4</fullName>
    </recommendedName>
</protein>
<accession>Q6YF29</accession>
<feature type="signal peptide" evidence="2">
    <location>
        <begin position="1"/>
        <end position="17"/>
    </location>
</feature>
<feature type="chain" id="PRO_5041159166" description="Class II hydrophobin 4">
    <location>
        <begin position="18"/>
        <end position="100"/>
    </location>
</feature>
<feature type="disulfide bond" evidence="1">
    <location>
        <begin position="29"/>
        <end position="79"/>
    </location>
</feature>
<feature type="disulfide bond" evidence="1">
    <location>
        <begin position="40"/>
        <end position="70"/>
    </location>
</feature>
<feature type="disulfide bond" evidence="1">
    <location>
        <begin position="41"/>
        <end position="53"/>
    </location>
</feature>
<feature type="disulfide bond" evidence="1">
    <location>
        <begin position="80"/>
        <end position="92"/>
    </location>
</feature>
<dbReference type="EMBL" id="AY155499">
    <property type="protein sequence ID" value="AAO16870.1"/>
    <property type="molecule type" value="Genomic_DNA"/>
</dbReference>
<dbReference type="OrthoDB" id="4500971at2759"/>
<dbReference type="GO" id="GO:0005576">
    <property type="term" value="C:extracellular region"/>
    <property type="evidence" value="ECO:0007669"/>
    <property type="project" value="UniProtKB-KW"/>
</dbReference>
<dbReference type="CDD" id="cd23508">
    <property type="entry name" value="hydrophobin_II"/>
    <property type="match status" value="1"/>
</dbReference>
<dbReference type="Gene3D" id="3.20.120.10">
    <property type="entry name" value="Hydrophobin"/>
    <property type="match status" value="1"/>
</dbReference>
<dbReference type="InterPro" id="IPR010636">
    <property type="entry name" value="Cerato-ulmin_hydrophobin"/>
</dbReference>
<dbReference type="InterPro" id="IPR036686">
    <property type="entry name" value="Hydrophobin_sf"/>
</dbReference>
<dbReference type="PANTHER" id="PTHR42341">
    <property type="entry name" value="HYDROPHOBIN"/>
    <property type="match status" value="1"/>
</dbReference>
<dbReference type="PANTHER" id="PTHR42341:SF1">
    <property type="entry name" value="HYDROPHOBIN"/>
    <property type="match status" value="1"/>
</dbReference>
<dbReference type="Pfam" id="PF06766">
    <property type="entry name" value="Hydrophobin_2"/>
    <property type="match status" value="1"/>
</dbReference>
<dbReference type="SUPFAM" id="SSF101751">
    <property type="entry name" value="Hydrophobin II, HfbII"/>
    <property type="match status" value="1"/>
</dbReference>
<keyword id="KW-0134">Cell wall</keyword>
<keyword id="KW-1015">Disulfide bond</keyword>
<keyword id="KW-0964">Secreted</keyword>
<keyword id="KW-0732">Signal</keyword>
<sequence length="100" mass="10194">MQFYAIASLFLAGTAFAAPATSPNGYDACPDGGLIGTPQCCSLDLVGVLSGECSSPSKTPNSAKEFQEICAASGQKARCCFLSEVFTLGAFCQKPVGVTA</sequence>
<gene>
    <name evidence="4" type="primary">HYD4</name>
</gene>